<protein>
    <recommendedName>
        <fullName>WD repeat-containing protein 89</fullName>
    </recommendedName>
</protein>
<accession>Q9D0R9</accession>
<reference key="1">
    <citation type="journal article" date="2005" name="Science">
        <title>The transcriptional landscape of the mammalian genome.</title>
        <authorList>
            <person name="Carninci P."/>
            <person name="Kasukawa T."/>
            <person name="Katayama S."/>
            <person name="Gough J."/>
            <person name="Frith M.C."/>
            <person name="Maeda N."/>
            <person name="Oyama R."/>
            <person name="Ravasi T."/>
            <person name="Lenhard B."/>
            <person name="Wells C."/>
            <person name="Kodzius R."/>
            <person name="Shimokawa K."/>
            <person name="Bajic V.B."/>
            <person name="Brenner S.E."/>
            <person name="Batalov S."/>
            <person name="Forrest A.R."/>
            <person name="Zavolan M."/>
            <person name="Davis M.J."/>
            <person name="Wilming L.G."/>
            <person name="Aidinis V."/>
            <person name="Allen J.E."/>
            <person name="Ambesi-Impiombato A."/>
            <person name="Apweiler R."/>
            <person name="Aturaliya R.N."/>
            <person name="Bailey T.L."/>
            <person name="Bansal M."/>
            <person name="Baxter L."/>
            <person name="Beisel K.W."/>
            <person name="Bersano T."/>
            <person name="Bono H."/>
            <person name="Chalk A.M."/>
            <person name="Chiu K.P."/>
            <person name="Choudhary V."/>
            <person name="Christoffels A."/>
            <person name="Clutterbuck D.R."/>
            <person name="Crowe M.L."/>
            <person name="Dalla E."/>
            <person name="Dalrymple B.P."/>
            <person name="de Bono B."/>
            <person name="Della Gatta G."/>
            <person name="di Bernardo D."/>
            <person name="Down T."/>
            <person name="Engstrom P."/>
            <person name="Fagiolini M."/>
            <person name="Faulkner G."/>
            <person name="Fletcher C.F."/>
            <person name="Fukushima T."/>
            <person name="Furuno M."/>
            <person name="Futaki S."/>
            <person name="Gariboldi M."/>
            <person name="Georgii-Hemming P."/>
            <person name="Gingeras T.R."/>
            <person name="Gojobori T."/>
            <person name="Green R.E."/>
            <person name="Gustincich S."/>
            <person name="Harbers M."/>
            <person name="Hayashi Y."/>
            <person name="Hensch T.K."/>
            <person name="Hirokawa N."/>
            <person name="Hill D."/>
            <person name="Huminiecki L."/>
            <person name="Iacono M."/>
            <person name="Ikeo K."/>
            <person name="Iwama A."/>
            <person name="Ishikawa T."/>
            <person name="Jakt M."/>
            <person name="Kanapin A."/>
            <person name="Katoh M."/>
            <person name="Kawasawa Y."/>
            <person name="Kelso J."/>
            <person name="Kitamura H."/>
            <person name="Kitano H."/>
            <person name="Kollias G."/>
            <person name="Krishnan S.P."/>
            <person name="Kruger A."/>
            <person name="Kummerfeld S.K."/>
            <person name="Kurochkin I.V."/>
            <person name="Lareau L.F."/>
            <person name="Lazarevic D."/>
            <person name="Lipovich L."/>
            <person name="Liu J."/>
            <person name="Liuni S."/>
            <person name="McWilliam S."/>
            <person name="Madan Babu M."/>
            <person name="Madera M."/>
            <person name="Marchionni L."/>
            <person name="Matsuda H."/>
            <person name="Matsuzawa S."/>
            <person name="Miki H."/>
            <person name="Mignone F."/>
            <person name="Miyake S."/>
            <person name="Morris K."/>
            <person name="Mottagui-Tabar S."/>
            <person name="Mulder N."/>
            <person name="Nakano N."/>
            <person name="Nakauchi H."/>
            <person name="Ng P."/>
            <person name="Nilsson R."/>
            <person name="Nishiguchi S."/>
            <person name="Nishikawa S."/>
            <person name="Nori F."/>
            <person name="Ohara O."/>
            <person name="Okazaki Y."/>
            <person name="Orlando V."/>
            <person name="Pang K.C."/>
            <person name="Pavan W.J."/>
            <person name="Pavesi G."/>
            <person name="Pesole G."/>
            <person name="Petrovsky N."/>
            <person name="Piazza S."/>
            <person name="Reed J."/>
            <person name="Reid J.F."/>
            <person name="Ring B.Z."/>
            <person name="Ringwald M."/>
            <person name="Rost B."/>
            <person name="Ruan Y."/>
            <person name="Salzberg S.L."/>
            <person name="Sandelin A."/>
            <person name="Schneider C."/>
            <person name="Schoenbach C."/>
            <person name="Sekiguchi K."/>
            <person name="Semple C.A."/>
            <person name="Seno S."/>
            <person name="Sessa L."/>
            <person name="Sheng Y."/>
            <person name="Shibata Y."/>
            <person name="Shimada H."/>
            <person name="Shimada K."/>
            <person name="Silva D."/>
            <person name="Sinclair B."/>
            <person name="Sperling S."/>
            <person name="Stupka E."/>
            <person name="Sugiura K."/>
            <person name="Sultana R."/>
            <person name="Takenaka Y."/>
            <person name="Taki K."/>
            <person name="Tammoja K."/>
            <person name="Tan S.L."/>
            <person name="Tang S."/>
            <person name="Taylor M.S."/>
            <person name="Tegner J."/>
            <person name="Teichmann S.A."/>
            <person name="Ueda H.R."/>
            <person name="van Nimwegen E."/>
            <person name="Verardo R."/>
            <person name="Wei C.L."/>
            <person name="Yagi K."/>
            <person name="Yamanishi H."/>
            <person name="Zabarovsky E."/>
            <person name="Zhu S."/>
            <person name="Zimmer A."/>
            <person name="Hide W."/>
            <person name="Bult C."/>
            <person name="Grimmond S.M."/>
            <person name="Teasdale R.D."/>
            <person name="Liu E.T."/>
            <person name="Brusic V."/>
            <person name="Quackenbush J."/>
            <person name="Wahlestedt C."/>
            <person name="Mattick J.S."/>
            <person name="Hume D.A."/>
            <person name="Kai C."/>
            <person name="Sasaki D."/>
            <person name="Tomaru Y."/>
            <person name="Fukuda S."/>
            <person name="Kanamori-Katayama M."/>
            <person name="Suzuki M."/>
            <person name="Aoki J."/>
            <person name="Arakawa T."/>
            <person name="Iida J."/>
            <person name="Imamura K."/>
            <person name="Itoh M."/>
            <person name="Kato T."/>
            <person name="Kawaji H."/>
            <person name="Kawagashira N."/>
            <person name="Kawashima T."/>
            <person name="Kojima M."/>
            <person name="Kondo S."/>
            <person name="Konno H."/>
            <person name="Nakano K."/>
            <person name="Ninomiya N."/>
            <person name="Nishio T."/>
            <person name="Okada M."/>
            <person name="Plessy C."/>
            <person name="Shibata K."/>
            <person name="Shiraki T."/>
            <person name="Suzuki S."/>
            <person name="Tagami M."/>
            <person name="Waki K."/>
            <person name="Watahiki A."/>
            <person name="Okamura-Oho Y."/>
            <person name="Suzuki H."/>
            <person name="Kawai J."/>
            <person name="Hayashizaki Y."/>
        </authorList>
    </citation>
    <scope>NUCLEOTIDE SEQUENCE [LARGE SCALE MRNA]</scope>
    <source>
        <strain>C57BL/6J</strain>
    </source>
</reference>
<reference key="2">
    <citation type="journal article" date="2004" name="Genome Res.">
        <title>The status, quality, and expansion of the NIH full-length cDNA project: the Mammalian Gene Collection (MGC).</title>
        <authorList>
            <consortium name="The MGC Project Team"/>
        </authorList>
    </citation>
    <scope>NUCLEOTIDE SEQUENCE [LARGE SCALE MRNA]</scope>
</reference>
<dbReference type="EMBL" id="AK011125">
    <property type="protein sequence ID" value="BAB27418.1"/>
    <property type="molecule type" value="mRNA"/>
</dbReference>
<dbReference type="EMBL" id="BC111903">
    <property type="protein sequence ID" value="AAI11904.1"/>
    <property type="molecule type" value="mRNA"/>
</dbReference>
<dbReference type="EMBL" id="BC112430">
    <property type="protein sequence ID" value="AAI12431.1"/>
    <property type="molecule type" value="mRNA"/>
</dbReference>
<dbReference type="CCDS" id="CCDS49090.1"/>
<dbReference type="RefSeq" id="NP_082479.1">
    <property type="nucleotide sequence ID" value="NM_028203.1"/>
</dbReference>
<dbReference type="SMR" id="Q9D0R9"/>
<dbReference type="FunCoup" id="Q9D0R9">
    <property type="interactions" value="247"/>
</dbReference>
<dbReference type="STRING" id="10090.ENSMUSP00000050532"/>
<dbReference type="iPTMnet" id="Q9D0R9"/>
<dbReference type="PhosphoSitePlus" id="Q9D0R9"/>
<dbReference type="jPOST" id="Q9D0R9"/>
<dbReference type="PaxDb" id="10090-ENSMUSP00000050532"/>
<dbReference type="PeptideAtlas" id="Q9D0R9"/>
<dbReference type="ProteomicsDB" id="299974"/>
<dbReference type="Pumba" id="Q9D0R9"/>
<dbReference type="Antibodypedia" id="38">
    <property type="antibodies" value="102 antibodies from 16 providers"/>
</dbReference>
<dbReference type="Ensembl" id="ENSMUST00000062370.9">
    <property type="protein sequence ID" value="ENSMUSP00000050532.8"/>
    <property type="gene ID" value="ENSMUSG00000045690.9"/>
</dbReference>
<dbReference type="Ensembl" id="ENSMUST00000187307.2">
    <property type="protein sequence ID" value="ENSMUSP00000140172.2"/>
    <property type="gene ID" value="ENSMUSG00000045690.9"/>
</dbReference>
<dbReference type="GeneID" id="72338"/>
<dbReference type="KEGG" id="mmu:72338"/>
<dbReference type="UCSC" id="uc007nxj.2">
    <property type="organism name" value="mouse"/>
</dbReference>
<dbReference type="AGR" id="MGI:1919588"/>
<dbReference type="CTD" id="112840"/>
<dbReference type="MGI" id="MGI:1919588">
    <property type="gene designation" value="Wdr89"/>
</dbReference>
<dbReference type="VEuPathDB" id="HostDB:ENSMUSG00000045690"/>
<dbReference type="eggNOG" id="KOG1188">
    <property type="taxonomic scope" value="Eukaryota"/>
</dbReference>
<dbReference type="GeneTree" id="ENSGT00390000006996"/>
<dbReference type="HOGENOM" id="CLU_037323_4_0_1"/>
<dbReference type="InParanoid" id="Q9D0R9"/>
<dbReference type="OMA" id="YHEKTDK"/>
<dbReference type="OrthoDB" id="25131at2759"/>
<dbReference type="PhylomeDB" id="Q9D0R9"/>
<dbReference type="TreeFam" id="TF324390"/>
<dbReference type="BioGRID-ORCS" id="72338">
    <property type="hits" value="1 hit in 77 CRISPR screens"/>
</dbReference>
<dbReference type="ChiTaRS" id="Wdr89">
    <property type="organism name" value="mouse"/>
</dbReference>
<dbReference type="PRO" id="PR:Q9D0R9"/>
<dbReference type="Proteomes" id="UP000000589">
    <property type="component" value="Chromosome 12"/>
</dbReference>
<dbReference type="RNAct" id="Q9D0R9">
    <property type="molecule type" value="protein"/>
</dbReference>
<dbReference type="Bgee" id="ENSMUSG00000045690">
    <property type="expression patterns" value="Expressed in retinal neural layer and 152 other cell types or tissues"/>
</dbReference>
<dbReference type="GO" id="GO:0022038">
    <property type="term" value="P:corpus callosum development"/>
    <property type="evidence" value="ECO:0000315"/>
    <property type="project" value="MGI"/>
</dbReference>
<dbReference type="GO" id="GO:0021591">
    <property type="term" value="P:ventricular system development"/>
    <property type="evidence" value="ECO:0000315"/>
    <property type="project" value="MGI"/>
</dbReference>
<dbReference type="Gene3D" id="2.130.10.10">
    <property type="entry name" value="YVTN repeat-like/Quinoprotein amine dehydrogenase"/>
    <property type="match status" value="2"/>
</dbReference>
<dbReference type="InterPro" id="IPR015943">
    <property type="entry name" value="WD40/YVTN_repeat-like_dom_sf"/>
</dbReference>
<dbReference type="InterPro" id="IPR036322">
    <property type="entry name" value="WD40_repeat_dom_sf"/>
</dbReference>
<dbReference type="InterPro" id="IPR001680">
    <property type="entry name" value="WD40_rpt"/>
</dbReference>
<dbReference type="InterPro" id="IPR039328">
    <property type="entry name" value="WDR89"/>
</dbReference>
<dbReference type="PANTHER" id="PTHR22889">
    <property type="entry name" value="WD REPEAT-CONTAINING PROTEIN 89"/>
    <property type="match status" value="1"/>
</dbReference>
<dbReference type="PANTHER" id="PTHR22889:SF0">
    <property type="entry name" value="WD REPEAT-CONTAINING PROTEIN 89"/>
    <property type="match status" value="1"/>
</dbReference>
<dbReference type="Pfam" id="PF00400">
    <property type="entry name" value="WD40"/>
    <property type="match status" value="3"/>
</dbReference>
<dbReference type="SMART" id="SM00320">
    <property type="entry name" value="WD40"/>
    <property type="match status" value="6"/>
</dbReference>
<dbReference type="SUPFAM" id="SSF50978">
    <property type="entry name" value="WD40 repeat-like"/>
    <property type="match status" value="1"/>
</dbReference>
<dbReference type="PROSITE" id="PS50082">
    <property type="entry name" value="WD_REPEATS_2"/>
    <property type="match status" value="3"/>
</dbReference>
<dbReference type="PROSITE" id="PS50294">
    <property type="entry name" value="WD_REPEATS_REGION"/>
    <property type="match status" value="2"/>
</dbReference>
<organism>
    <name type="scientific">Mus musculus</name>
    <name type="common">Mouse</name>
    <dbReference type="NCBI Taxonomy" id="10090"/>
    <lineage>
        <taxon>Eukaryota</taxon>
        <taxon>Metazoa</taxon>
        <taxon>Chordata</taxon>
        <taxon>Craniata</taxon>
        <taxon>Vertebrata</taxon>
        <taxon>Euteleostomi</taxon>
        <taxon>Mammalia</taxon>
        <taxon>Eutheria</taxon>
        <taxon>Euarchontoglires</taxon>
        <taxon>Glires</taxon>
        <taxon>Rodentia</taxon>
        <taxon>Myomorpha</taxon>
        <taxon>Muroidea</taxon>
        <taxon>Muridae</taxon>
        <taxon>Murinae</taxon>
        <taxon>Mus</taxon>
        <taxon>Mus</taxon>
    </lineage>
</organism>
<feature type="chain" id="PRO_0000330845" description="WD repeat-containing protein 89">
    <location>
        <begin position="1"/>
        <end position="386"/>
    </location>
</feature>
<feature type="repeat" description="WD 1">
    <location>
        <begin position="21"/>
        <end position="65"/>
    </location>
</feature>
<feature type="repeat" description="WD 2">
    <location>
        <begin position="68"/>
        <end position="107"/>
    </location>
</feature>
<feature type="repeat" description="WD 3">
    <location>
        <begin position="112"/>
        <end position="156"/>
    </location>
</feature>
<feature type="repeat" description="WD 4">
    <location>
        <begin position="167"/>
        <end position="207"/>
    </location>
</feature>
<feature type="repeat" description="WD 5">
    <location>
        <begin position="213"/>
        <end position="253"/>
    </location>
</feature>
<feature type="repeat" description="WD 6">
    <location>
        <begin position="318"/>
        <end position="357"/>
    </location>
</feature>
<gene>
    <name type="primary">Wdr89</name>
</gene>
<name>WDR89_MOUSE</name>
<proteinExistence type="evidence at transcript level"/>
<keyword id="KW-1185">Reference proteome</keyword>
<keyword id="KW-0677">Repeat</keyword>
<keyword id="KW-0853">WD repeat</keyword>
<sequence length="386" mass="42470">MEKIEDQFASLHIVRRSSEPKEPTYLLGIDTSKTVQADKGGLVAVLCSNGSIRIYDKETLHLLREFGGSPGLLSGVSFANSCDSVYSASTDGTVKCWDARGASEKPVQLFKGYPSCSFISFDVNCKDHVICAGAEKVDEDALLVFWDARFTSQDLSTRDPLGAYSETHSDDITQVRFHPSNPNLVVSGSTDGLVNVFDLSADKEEDALVATCNSVSSVSCIGWCGKDYKQIYCMTHDEGFCWWDLNHLDTDEPITCLNIQDVREITDVKDGHLDYLIGGLYHEKMDRLFVIGGTNTGKIHLLSCTSAGLTHVTSLHGGHAATVRSFCWNVSEDSLLTGGEDAQLLLWKPGAMEKTFTKKDSLKIASSVQQRVRVHSSDSYKKRKQQ</sequence>